<organism>
    <name type="scientific">Azorhizobium caulinodans (strain ATCC 43989 / DSM 5975 / JCM 20966 / LMG 6465 / NBRC 14845 / NCIMB 13405 / ORS 571)</name>
    <dbReference type="NCBI Taxonomy" id="438753"/>
    <lineage>
        <taxon>Bacteria</taxon>
        <taxon>Pseudomonadati</taxon>
        <taxon>Pseudomonadota</taxon>
        <taxon>Alphaproteobacteria</taxon>
        <taxon>Hyphomicrobiales</taxon>
        <taxon>Xanthobacteraceae</taxon>
        <taxon>Azorhizobium</taxon>
    </lineage>
</organism>
<gene>
    <name evidence="1" type="primary">bioB</name>
    <name type="ordered locus">AZC_0361</name>
</gene>
<name>BIOB_AZOC5</name>
<proteinExistence type="inferred from homology"/>
<accession>A8IJU8</accession>
<comment type="function">
    <text evidence="1">Catalyzes the conversion of dethiobiotin (DTB) to biotin by the insertion of a sulfur atom into dethiobiotin via a radical-based mechanism.</text>
</comment>
<comment type="catalytic activity">
    <reaction evidence="1">
        <text>(4R,5S)-dethiobiotin + (sulfur carrier)-SH + 2 reduced [2Fe-2S]-[ferredoxin] + 2 S-adenosyl-L-methionine = (sulfur carrier)-H + biotin + 2 5'-deoxyadenosine + 2 L-methionine + 2 oxidized [2Fe-2S]-[ferredoxin]</text>
        <dbReference type="Rhea" id="RHEA:22060"/>
        <dbReference type="Rhea" id="RHEA-COMP:10000"/>
        <dbReference type="Rhea" id="RHEA-COMP:10001"/>
        <dbReference type="Rhea" id="RHEA-COMP:14737"/>
        <dbReference type="Rhea" id="RHEA-COMP:14739"/>
        <dbReference type="ChEBI" id="CHEBI:17319"/>
        <dbReference type="ChEBI" id="CHEBI:29917"/>
        <dbReference type="ChEBI" id="CHEBI:33737"/>
        <dbReference type="ChEBI" id="CHEBI:33738"/>
        <dbReference type="ChEBI" id="CHEBI:57586"/>
        <dbReference type="ChEBI" id="CHEBI:57844"/>
        <dbReference type="ChEBI" id="CHEBI:59789"/>
        <dbReference type="ChEBI" id="CHEBI:64428"/>
        <dbReference type="ChEBI" id="CHEBI:149473"/>
        <dbReference type="EC" id="2.8.1.6"/>
    </reaction>
</comment>
<comment type="cofactor">
    <cofactor evidence="1">
        <name>[4Fe-4S] cluster</name>
        <dbReference type="ChEBI" id="CHEBI:49883"/>
    </cofactor>
    <text evidence="1">Binds 1 [4Fe-4S] cluster. The cluster is coordinated with 3 cysteines and an exchangeable S-adenosyl-L-methionine.</text>
</comment>
<comment type="cofactor">
    <cofactor evidence="1">
        <name>[2Fe-2S] cluster</name>
        <dbReference type="ChEBI" id="CHEBI:190135"/>
    </cofactor>
    <text evidence="1">Binds 1 [2Fe-2S] cluster. The cluster is coordinated with 3 cysteines and 1 arginine.</text>
</comment>
<comment type="pathway">
    <text evidence="1">Cofactor biosynthesis; biotin biosynthesis; biotin from 7,8-diaminononanoate: step 2/2.</text>
</comment>
<comment type="subunit">
    <text evidence="1">Homodimer.</text>
</comment>
<comment type="similarity">
    <text evidence="1">Belongs to the radical SAM superfamily. Biotin synthase family.</text>
</comment>
<dbReference type="EC" id="2.8.1.6" evidence="1"/>
<dbReference type="EMBL" id="AP009384">
    <property type="protein sequence ID" value="BAF86359.1"/>
    <property type="molecule type" value="Genomic_DNA"/>
</dbReference>
<dbReference type="RefSeq" id="WP_012168892.1">
    <property type="nucleotide sequence ID" value="NC_009937.1"/>
</dbReference>
<dbReference type="SMR" id="A8IJU8"/>
<dbReference type="STRING" id="438753.AZC_0361"/>
<dbReference type="KEGG" id="azc:AZC_0361"/>
<dbReference type="eggNOG" id="COG0502">
    <property type="taxonomic scope" value="Bacteria"/>
</dbReference>
<dbReference type="HOGENOM" id="CLU_033172_1_2_5"/>
<dbReference type="UniPathway" id="UPA00078">
    <property type="reaction ID" value="UER00162"/>
</dbReference>
<dbReference type="Proteomes" id="UP000000270">
    <property type="component" value="Chromosome"/>
</dbReference>
<dbReference type="GO" id="GO:0051537">
    <property type="term" value="F:2 iron, 2 sulfur cluster binding"/>
    <property type="evidence" value="ECO:0007669"/>
    <property type="project" value="UniProtKB-KW"/>
</dbReference>
<dbReference type="GO" id="GO:0051539">
    <property type="term" value="F:4 iron, 4 sulfur cluster binding"/>
    <property type="evidence" value="ECO:0007669"/>
    <property type="project" value="UniProtKB-KW"/>
</dbReference>
<dbReference type="GO" id="GO:0004076">
    <property type="term" value="F:biotin synthase activity"/>
    <property type="evidence" value="ECO:0007669"/>
    <property type="project" value="UniProtKB-UniRule"/>
</dbReference>
<dbReference type="GO" id="GO:0005506">
    <property type="term" value="F:iron ion binding"/>
    <property type="evidence" value="ECO:0007669"/>
    <property type="project" value="UniProtKB-UniRule"/>
</dbReference>
<dbReference type="GO" id="GO:0009102">
    <property type="term" value="P:biotin biosynthetic process"/>
    <property type="evidence" value="ECO:0007669"/>
    <property type="project" value="UniProtKB-UniRule"/>
</dbReference>
<dbReference type="CDD" id="cd01335">
    <property type="entry name" value="Radical_SAM"/>
    <property type="match status" value="1"/>
</dbReference>
<dbReference type="Gene3D" id="3.20.20.70">
    <property type="entry name" value="Aldolase class I"/>
    <property type="match status" value="1"/>
</dbReference>
<dbReference type="HAMAP" id="MF_01694">
    <property type="entry name" value="BioB"/>
    <property type="match status" value="1"/>
</dbReference>
<dbReference type="InterPro" id="IPR013785">
    <property type="entry name" value="Aldolase_TIM"/>
</dbReference>
<dbReference type="InterPro" id="IPR010722">
    <property type="entry name" value="BATS_dom"/>
</dbReference>
<dbReference type="InterPro" id="IPR002684">
    <property type="entry name" value="Biotin_synth/BioAB"/>
</dbReference>
<dbReference type="InterPro" id="IPR024177">
    <property type="entry name" value="Biotin_synthase"/>
</dbReference>
<dbReference type="InterPro" id="IPR006638">
    <property type="entry name" value="Elp3/MiaA/NifB-like_rSAM"/>
</dbReference>
<dbReference type="InterPro" id="IPR007197">
    <property type="entry name" value="rSAM"/>
</dbReference>
<dbReference type="NCBIfam" id="TIGR00433">
    <property type="entry name" value="bioB"/>
    <property type="match status" value="1"/>
</dbReference>
<dbReference type="PANTHER" id="PTHR22976">
    <property type="entry name" value="BIOTIN SYNTHASE"/>
    <property type="match status" value="1"/>
</dbReference>
<dbReference type="PANTHER" id="PTHR22976:SF2">
    <property type="entry name" value="BIOTIN SYNTHASE, MITOCHONDRIAL"/>
    <property type="match status" value="1"/>
</dbReference>
<dbReference type="Pfam" id="PF06968">
    <property type="entry name" value="BATS"/>
    <property type="match status" value="1"/>
</dbReference>
<dbReference type="Pfam" id="PF04055">
    <property type="entry name" value="Radical_SAM"/>
    <property type="match status" value="1"/>
</dbReference>
<dbReference type="PIRSF" id="PIRSF001619">
    <property type="entry name" value="Biotin_synth"/>
    <property type="match status" value="1"/>
</dbReference>
<dbReference type="SFLD" id="SFLDG01060">
    <property type="entry name" value="BATS_domain_containing"/>
    <property type="match status" value="1"/>
</dbReference>
<dbReference type="SFLD" id="SFLDF00272">
    <property type="entry name" value="biotin_synthase"/>
    <property type="match status" value="1"/>
</dbReference>
<dbReference type="SMART" id="SM00876">
    <property type="entry name" value="BATS"/>
    <property type="match status" value="1"/>
</dbReference>
<dbReference type="SMART" id="SM00729">
    <property type="entry name" value="Elp3"/>
    <property type="match status" value="1"/>
</dbReference>
<dbReference type="SUPFAM" id="SSF102114">
    <property type="entry name" value="Radical SAM enzymes"/>
    <property type="match status" value="1"/>
</dbReference>
<dbReference type="PROSITE" id="PS51918">
    <property type="entry name" value="RADICAL_SAM"/>
    <property type="match status" value="1"/>
</dbReference>
<keyword id="KW-0001">2Fe-2S</keyword>
<keyword id="KW-0004">4Fe-4S</keyword>
<keyword id="KW-0093">Biotin biosynthesis</keyword>
<keyword id="KW-0408">Iron</keyword>
<keyword id="KW-0411">Iron-sulfur</keyword>
<keyword id="KW-0479">Metal-binding</keyword>
<keyword id="KW-1185">Reference proteome</keyword>
<keyword id="KW-0949">S-adenosyl-L-methionine</keyword>
<keyword id="KW-0808">Transferase</keyword>
<feature type="chain" id="PRO_0000381211" description="Biotin synthase">
    <location>
        <begin position="1"/>
        <end position="325"/>
    </location>
</feature>
<feature type="domain" description="Radical SAM core" evidence="2">
    <location>
        <begin position="43"/>
        <end position="262"/>
    </location>
</feature>
<feature type="binding site" evidence="1">
    <location>
        <position position="58"/>
    </location>
    <ligand>
        <name>[4Fe-4S] cluster</name>
        <dbReference type="ChEBI" id="CHEBI:49883"/>
        <note>4Fe-4S-S-AdoMet</note>
    </ligand>
</feature>
<feature type="binding site" evidence="1">
    <location>
        <position position="62"/>
    </location>
    <ligand>
        <name>[4Fe-4S] cluster</name>
        <dbReference type="ChEBI" id="CHEBI:49883"/>
        <note>4Fe-4S-S-AdoMet</note>
    </ligand>
</feature>
<feature type="binding site" evidence="1">
    <location>
        <position position="65"/>
    </location>
    <ligand>
        <name>[4Fe-4S] cluster</name>
        <dbReference type="ChEBI" id="CHEBI:49883"/>
        <note>4Fe-4S-S-AdoMet</note>
    </ligand>
</feature>
<feature type="binding site" evidence="1">
    <location>
        <position position="102"/>
    </location>
    <ligand>
        <name>[2Fe-2S] cluster</name>
        <dbReference type="ChEBI" id="CHEBI:190135"/>
    </ligand>
</feature>
<feature type="binding site" evidence="1">
    <location>
        <position position="133"/>
    </location>
    <ligand>
        <name>[2Fe-2S] cluster</name>
        <dbReference type="ChEBI" id="CHEBI:190135"/>
    </ligand>
</feature>
<feature type="binding site" evidence="1">
    <location>
        <position position="193"/>
    </location>
    <ligand>
        <name>[2Fe-2S] cluster</name>
        <dbReference type="ChEBI" id="CHEBI:190135"/>
    </ligand>
</feature>
<feature type="binding site" evidence="1">
    <location>
        <position position="266"/>
    </location>
    <ligand>
        <name>[2Fe-2S] cluster</name>
        <dbReference type="ChEBI" id="CHEBI:190135"/>
    </ligand>
</feature>
<protein>
    <recommendedName>
        <fullName evidence="1">Biotin synthase</fullName>
        <ecNumber evidence="1">2.8.1.6</ecNumber>
    </recommendedName>
</protein>
<evidence type="ECO:0000255" key="1">
    <source>
        <dbReference type="HAMAP-Rule" id="MF_01694"/>
    </source>
</evidence>
<evidence type="ECO:0000255" key="2">
    <source>
        <dbReference type="PROSITE-ProRule" id="PRU01266"/>
    </source>
</evidence>
<reference key="1">
    <citation type="submission" date="2007-04" db="EMBL/GenBank/DDBJ databases">
        <title>Complete genome sequence of the nitrogen-fixing bacterium Azorhizobium caulinodans ORS571.</title>
        <authorList>
            <person name="Lee K.B."/>
            <person name="Backer P.D."/>
            <person name="Aono T."/>
            <person name="Liu C.T."/>
            <person name="Suzuki S."/>
            <person name="Suzuki T."/>
            <person name="Kaneko T."/>
            <person name="Yamada M."/>
            <person name="Tabata S."/>
            <person name="Kupfer D.M."/>
            <person name="Najar F.Z."/>
            <person name="Wiley G.B."/>
            <person name="Roe B."/>
            <person name="Binnewies T."/>
            <person name="Ussery D."/>
            <person name="Vereecke D."/>
            <person name="Gevers D."/>
            <person name="Holsters M."/>
            <person name="Oyaizu H."/>
        </authorList>
    </citation>
    <scope>NUCLEOTIDE SEQUENCE [LARGE SCALE GENOMIC DNA]</scope>
    <source>
        <strain>ATCC 43989 / DSM 5975 / JCM 20966 / LMG 6465 / NBRC 14845 / NCIMB 13405 / ORS 571</strain>
    </source>
</reference>
<sequence length="325" mass="34656">MSAAIAATARPAAEMRTRALYDLPLPELMFRAQAVHRAHFDACSVETAQLLSIKTGGCPEDCGYCSQSAHHDTGVAATRLMDVEAVLAEARKAKAAGAARFCMGAAWRAPKDRDMDAVCAMISGVRALGLETCVTLGMLTPAQVDRLSAAGLDYYNHNVDTSPAYYPRITSTRTLDDRLETLGHVRAGGIKVCCGGIVGMGETIEDRLAMLELLAGLDPHPESVPLNMWTPIDGTPVKAFEEKVDPIAFVRLVAVARLLMPRSVVRLSAGRHTLSDEAQALCFLAGANSIFVGDTLLTTPNMEESRDAVLLARLGLRPAPAQPSA</sequence>